<gene>
    <name type="primary">TST</name>
</gene>
<comment type="function">
    <text evidence="1">Together with MRPL18, acts as a mitochondrial import factor for the cytosolic 5S rRNA. Only the nascent unfolded cytoplasmic form is able to bind to the 5S rRNA (By similarity). Formation of iron-sulfur complexes and cyanide detoxification. Binds molecular oxygen and sulfur.</text>
</comment>
<comment type="catalytic activity">
    <reaction>
        <text>thiosulfate + hydrogen cyanide = thiocyanate + sulfite + 2 H(+)</text>
        <dbReference type="Rhea" id="RHEA:16881"/>
        <dbReference type="ChEBI" id="CHEBI:15378"/>
        <dbReference type="ChEBI" id="CHEBI:17359"/>
        <dbReference type="ChEBI" id="CHEBI:18022"/>
        <dbReference type="ChEBI" id="CHEBI:18407"/>
        <dbReference type="ChEBI" id="CHEBI:33542"/>
        <dbReference type="EC" id="2.8.1.1"/>
    </reaction>
</comment>
<comment type="subunit">
    <text evidence="1">Monomer.</text>
</comment>
<comment type="subcellular location">
    <subcellularLocation>
        <location>Mitochondrion matrix</location>
    </subcellularLocation>
</comment>
<comment type="domain">
    <text evidence="1">Contains two rhodanese domains with different primary structures but with near identical secondary structure conformations suggesting a common evolutionary origin. Only the C-terminal rhodanese domain contains the catalytic cysteine residue (By similarity).</text>
</comment>
<organism>
    <name type="scientific">Cricetulus griseus</name>
    <name type="common">Chinese hamster</name>
    <name type="synonym">Cricetulus barabensis griseus</name>
    <dbReference type="NCBI Taxonomy" id="10029"/>
    <lineage>
        <taxon>Eukaryota</taxon>
        <taxon>Metazoa</taxon>
        <taxon>Chordata</taxon>
        <taxon>Craniata</taxon>
        <taxon>Vertebrata</taxon>
        <taxon>Euteleostomi</taxon>
        <taxon>Mammalia</taxon>
        <taxon>Eutheria</taxon>
        <taxon>Euarchontoglires</taxon>
        <taxon>Glires</taxon>
        <taxon>Rodentia</taxon>
        <taxon>Myomorpha</taxon>
        <taxon>Muroidea</taxon>
        <taxon>Cricetidae</taxon>
        <taxon>Cricetinae</taxon>
        <taxon>Cricetulus</taxon>
    </lineage>
</organism>
<feature type="chain" id="PRO_0000139394" description="Thiosulfate sulfurtransferase">
    <location>
        <begin position="1"/>
        <end position="297"/>
    </location>
</feature>
<feature type="domain" description="Rhodanese 1" evidence="6">
    <location>
        <begin position="25"/>
        <end position="143"/>
    </location>
</feature>
<feature type="domain" description="Rhodanese 2" evidence="6">
    <location>
        <begin position="173"/>
        <end position="288"/>
    </location>
</feature>
<feature type="region of interest" description="Hinge">
    <location>
        <begin position="144"/>
        <end position="159"/>
    </location>
</feature>
<feature type="active site" description="Cysteine persulfide intermediate" evidence="6">
    <location>
        <position position="248"/>
    </location>
</feature>
<feature type="binding site" evidence="1">
    <location>
        <position position="187"/>
    </location>
    <ligand>
        <name>substrate</name>
    </ligand>
</feature>
<feature type="binding site" evidence="1">
    <location>
        <position position="250"/>
    </location>
    <ligand>
        <name>substrate</name>
    </ligand>
</feature>
<feature type="modified residue" description="N6-acetyllysine; alternate" evidence="5">
    <location>
        <position position="14"/>
    </location>
</feature>
<feature type="modified residue" description="N6-succinyllysine; alternate" evidence="2">
    <location>
        <position position="14"/>
    </location>
</feature>
<feature type="modified residue" description="Phosphoserine" evidence="3">
    <location>
        <position position="38"/>
    </location>
</feature>
<feature type="modified residue" description="N6-acetyllysine; alternate" evidence="4">
    <location>
        <position position="136"/>
    </location>
</feature>
<feature type="modified residue" description="N6-succinyllysine; alternate" evidence="4">
    <location>
        <position position="136"/>
    </location>
</feature>
<feature type="modified residue" description="N6-acetyllysine" evidence="4">
    <location>
        <position position="163"/>
    </location>
</feature>
<feature type="modified residue" description="N6-acetyllysine; alternate" evidence="4">
    <location>
        <position position="175"/>
    </location>
</feature>
<feature type="modified residue" description="N6-succinyllysine; alternate" evidence="4">
    <location>
        <position position="175"/>
    </location>
</feature>
<feature type="modified residue" description="N6-acetyllysine; alternate" evidence="4">
    <location>
        <position position="224"/>
    </location>
</feature>
<feature type="modified residue" description="N6-succinyllysine; alternate" evidence="4">
    <location>
        <position position="224"/>
    </location>
</feature>
<feature type="modified residue" description="N6-acetyllysine" evidence="4">
    <location>
        <position position="236"/>
    </location>
</feature>
<feature type="modified residue" description="N6-acetyllysine; alternate" evidence="4">
    <location>
        <position position="237"/>
    </location>
</feature>
<feature type="modified residue" description="N6-succinyllysine; alternate" evidence="4">
    <location>
        <position position="237"/>
    </location>
</feature>
<feature type="glycosylation site" description="O-linked (GlcNAc) serine" evidence="1">
    <location>
        <position position="35"/>
    </location>
</feature>
<dbReference type="EC" id="2.8.1.1"/>
<dbReference type="EMBL" id="U23943">
    <property type="protein sequence ID" value="AAB84305.1"/>
    <property type="molecule type" value="mRNA"/>
</dbReference>
<dbReference type="RefSeq" id="NP_001233676.1">
    <property type="nucleotide sequence ID" value="NM_001246747.1"/>
</dbReference>
<dbReference type="SMR" id="P46635"/>
<dbReference type="GlyCosmos" id="P46635">
    <property type="glycosylation" value="1 site, No reported glycans"/>
</dbReference>
<dbReference type="PaxDb" id="10029-NP_001233676.1"/>
<dbReference type="GeneID" id="100689314"/>
<dbReference type="KEGG" id="cge:100689314"/>
<dbReference type="CTD" id="7263"/>
<dbReference type="eggNOG" id="KOG1529">
    <property type="taxonomic scope" value="Eukaryota"/>
</dbReference>
<dbReference type="OrthoDB" id="270167at2759"/>
<dbReference type="Proteomes" id="UP000694386">
    <property type="component" value="Unplaced"/>
</dbReference>
<dbReference type="Proteomes" id="UP001108280">
    <property type="component" value="Chromosome 2"/>
</dbReference>
<dbReference type="GO" id="GO:0005759">
    <property type="term" value="C:mitochondrial matrix"/>
    <property type="evidence" value="ECO:0007669"/>
    <property type="project" value="UniProtKB-SubCell"/>
</dbReference>
<dbReference type="GO" id="GO:0008097">
    <property type="term" value="F:5S rRNA binding"/>
    <property type="evidence" value="ECO:0000250"/>
    <property type="project" value="UniProtKB"/>
</dbReference>
<dbReference type="GO" id="GO:0004792">
    <property type="term" value="F:thiosulfate-cyanide sulfurtransferase activity"/>
    <property type="evidence" value="ECO:0007669"/>
    <property type="project" value="UniProtKB-EC"/>
</dbReference>
<dbReference type="GO" id="GO:0035928">
    <property type="term" value="P:rRNA import into mitochondrion"/>
    <property type="evidence" value="ECO:0000250"/>
    <property type="project" value="UniProtKB"/>
</dbReference>
<dbReference type="GO" id="GO:0051029">
    <property type="term" value="P:rRNA transport"/>
    <property type="evidence" value="ECO:0000250"/>
    <property type="project" value="UniProtKB"/>
</dbReference>
<dbReference type="CDD" id="cd01449">
    <property type="entry name" value="TST_Repeat_2"/>
    <property type="match status" value="1"/>
</dbReference>
<dbReference type="CDD" id="cd01445">
    <property type="entry name" value="TST_Repeats"/>
    <property type="match status" value="1"/>
</dbReference>
<dbReference type="FunFam" id="3.40.250.10:FF:000001">
    <property type="entry name" value="Sulfurtransferase"/>
    <property type="match status" value="1"/>
</dbReference>
<dbReference type="FunFam" id="3.40.250.10:FF:000008">
    <property type="entry name" value="Sulfurtransferase"/>
    <property type="match status" value="1"/>
</dbReference>
<dbReference type="Gene3D" id="3.40.250.10">
    <property type="entry name" value="Rhodanese-like domain"/>
    <property type="match status" value="2"/>
</dbReference>
<dbReference type="InterPro" id="IPR001763">
    <property type="entry name" value="Rhodanese-like_dom"/>
</dbReference>
<dbReference type="InterPro" id="IPR036873">
    <property type="entry name" value="Rhodanese-like_dom_sf"/>
</dbReference>
<dbReference type="InterPro" id="IPR001307">
    <property type="entry name" value="Thiosulphate_STrfase_CS"/>
</dbReference>
<dbReference type="InterPro" id="IPR045078">
    <property type="entry name" value="TST/MPST-like"/>
</dbReference>
<dbReference type="PANTHER" id="PTHR11364">
    <property type="entry name" value="THIOSULFATE SULFERTANSFERASE"/>
    <property type="match status" value="1"/>
</dbReference>
<dbReference type="PANTHER" id="PTHR11364:SF6">
    <property type="entry name" value="THIOSULFATE SULFURTRANSFERASE"/>
    <property type="match status" value="1"/>
</dbReference>
<dbReference type="Pfam" id="PF00581">
    <property type="entry name" value="Rhodanese"/>
    <property type="match status" value="2"/>
</dbReference>
<dbReference type="SMART" id="SM00450">
    <property type="entry name" value="RHOD"/>
    <property type="match status" value="2"/>
</dbReference>
<dbReference type="SUPFAM" id="SSF52821">
    <property type="entry name" value="Rhodanese/Cell cycle control phosphatase"/>
    <property type="match status" value="2"/>
</dbReference>
<dbReference type="PROSITE" id="PS00380">
    <property type="entry name" value="RHODANESE_1"/>
    <property type="match status" value="1"/>
</dbReference>
<dbReference type="PROSITE" id="PS00683">
    <property type="entry name" value="RHODANESE_2"/>
    <property type="match status" value="1"/>
</dbReference>
<dbReference type="PROSITE" id="PS50206">
    <property type="entry name" value="RHODANESE_3"/>
    <property type="match status" value="2"/>
</dbReference>
<name>THTR_CRIGR</name>
<evidence type="ECO:0000250" key="1"/>
<evidence type="ECO:0000250" key="2">
    <source>
        <dbReference type="UniProtKB" id="P00586"/>
    </source>
</evidence>
<evidence type="ECO:0000250" key="3">
    <source>
        <dbReference type="UniProtKB" id="P24329"/>
    </source>
</evidence>
<evidence type="ECO:0000250" key="4">
    <source>
        <dbReference type="UniProtKB" id="P52196"/>
    </source>
</evidence>
<evidence type="ECO:0000250" key="5">
    <source>
        <dbReference type="UniProtKB" id="Q16762"/>
    </source>
</evidence>
<evidence type="ECO:0000255" key="6">
    <source>
        <dbReference type="PROSITE-ProRule" id="PRU00173"/>
    </source>
</evidence>
<keyword id="KW-0007">Acetylation</keyword>
<keyword id="KW-0325">Glycoprotein</keyword>
<keyword id="KW-0496">Mitochondrion</keyword>
<keyword id="KW-0597">Phosphoprotein</keyword>
<keyword id="KW-0677">Repeat</keyword>
<keyword id="KW-0694">RNA-binding</keyword>
<keyword id="KW-0808">Transferase</keyword>
<sequence length="297" mass="33337">MVHQVLYRALVSTKWLAESIRSGSLGPGLRVLDASWYSPGTRQARKEYQERHVPGASFFDIEECRDTTSPYEMMLPSEAHFADYVGSLGISNDTHVVVYDGDNLGSFYAPRVWWMFRVFGHRTVSVLNGGFRNWLKEGHPVTSEPSRPEPAVFKATLDRSLLKTYEQVLENLQSKRFQLVDSRAQGRYLGTEPEPDIVGLDSGHIRGSANMPFMNFLTEDGFEKSPEELRAIFQDKKVDLSQPLIATCRKGVTACHIALAAYLCGKPDVAVYDGSWSEWFHQAPPETRVSQGKSGKA</sequence>
<accession>P46635</accession>
<reference key="1">
    <citation type="journal article" date="1995" name="Protein Expr. Purif.">
        <title>Chinese hamster rhodanese cDNA: activity of the expressed protein is not blocked by a C-terminal extension.</title>
        <authorList>
            <person name="Trevino R.J."/>
            <person name="Hunt J."/>
            <person name="Horowitz P.M."/>
            <person name="Chirgwin J.M."/>
        </authorList>
    </citation>
    <scope>NUCLEOTIDE SEQUENCE [MRNA]</scope>
    <source>
        <tissue>Ovary</tissue>
    </source>
</reference>
<proteinExistence type="evidence at transcript level"/>
<protein>
    <recommendedName>
        <fullName>Thiosulfate sulfurtransferase</fullName>
        <ecNumber>2.8.1.1</ecNumber>
    </recommendedName>
    <alternativeName>
        <fullName>Rhodanese</fullName>
    </alternativeName>
</protein>